<feature type="chain" id="PRO_0000191845" description="Bacteriohemerythrin">
    <location>
        <begin position="1"/>
        <end position="131"/>
    </location>
</feature>
<feature type="binding site" evidence="1">
    <location>
        <position position="20"/>
    </location>
    <ligand>
        <name>Fe cation</name>
        <dbReference type="ChEBI" id="CHEBI:24875"/>
        <label>1</label>
    </ligand>
</feature>
<feature type="binding site" evidence="1">
    <location>
        <position position="23"/>
    </location>
    <ligand>
        <name>Fe cation</name>
        <dbReference type="ChEBI" id="CHEBI:24875"/>
        <label>1</label>
    </ligand>
</feature>
<feature type="binding site" evidence="1">
    <location>
        <position position="56"/>
    </location>
    <ligand>
        <name>Fe cation</name>
        <dbReference type="ChEBI" id="CHEBI:24875"/>
        <label>1</label>
    </ligand>
</feature>
<feature type="binding site" evidence="1">
    <location>
        <position position="60"/>
    </location>
    <ligand>
        <name>Fe cation</name>
        <dbReference type="ChEBI" id="CHEBI:24875"/>
        <label>1</label>
    </ligand>
</feature>
<feature type="binding site" evidence="1">
    <location>
        <position position="60"/>
    </location>
    <ligand>
        <name>Fe cation</name>
        <dbReference type="ChEBI" id="CHEBI:24875"/>
        <label>2</label>
    </ligand>
</feature>
<feature type="binding site" evidence="1">
    <location>
        <position position="75"/>
    </location>
    <ligand>
        <name>Fe cation</name>
        <dbReference type="ChEBI" id="CHEBI:24875"/>
        <label>2</label>
    </ligand>
</feature>
<feature type="binding site" evidence="1">
    <location>
        <position position="79"/>
    </location>
    <ligand>
        <name>Fe cation</name>
        <dbReference type="ChEBI" id="CHEBI:24875"/>
        <label>2</label>
    </ligand>
</feature>
<feature type="binding site" evidence="1">
    <location>
        <position position="117"/>
    </location>
    <ligand>
        <name>Fe cation</name>
        <dbReference type="ChEBI" id="CHEBI:24875"/>
        <label>2</label>
    </ligand>
</feature>
<feature type="binding site" evidence="1">
    <location>
        <position position="122"/>
    </location>
    <ligand>
        <name>Fe cation</name>
        <dbReference type="ChEBI" id="CHEBI:24875"/>
        <label>1</label>
    </ligand>
</feature>
<feature type="binding site" evidence="1">
    <location>
        <position position="122"/>
    </location>
    <ligand>
        <name>Fe cation</name>
        <dbReference type="ChEBI" id="CHEBI:24875"/>
        <label>2</label>
    </ligand>
</feature>
<proteinExistence type="inferred from homology"/>
<reference key="1">
    <citation type="journal article" date="1998" name="Nature">
        <title>The complete genome of the hyperthermophilic bacterium Aquifex aeolicus.</title>
        <authorList>
            <person name="Deckert G."/>
            <person name="Warren P.V."/>
            <person name="Gaasterland T."/>
            <person name="Young W.G."/>
            <person name="Lenox A.L."/>
            <person name="Graham D.E."/>
            <person name="Overbeek R."/>
            <person name="Snead M.A."/>
            <person name="Keller M."/>
            <person name="Aujay M."/>
            <person name="Huber R."/>
            <person name="Feldman R.A."/>
            <person name="Short J.M."/>
            <person name="Olsen G.J."/>
            <person name="Swanson R.V."/>
        </authorList>
    </citation>
    <scope>NUCLEOTIDE SEQUENCE [LARGE SCALE GENOMIC DNA]</scope>
    <source>
        <strain>VF5</strain>
    </source>
</reference>
<name>HEMTB_AQUAE</name>
<accession>O67614</accession>
<organism>
    <name type="scientific">Aquifex aeolicus (strain VF5)</name>
    <dbReference type="NCBI Taxonomy" id="224324"/>
    <lineage>
        <taxon>Bacteria</taxon>
        <taxon>Pseudomonadati</taxon>
        <taxon>Aquificota</taxon>
        <taxon>Aquificia</taxon>
        <taxon>Aquificales</taxon>
        <taxon>Aquificaceae</taxon>
        <taxon>Aquifex</taxon>
    </lineage>
</organism>
<sequence length="131" mass="15964">MLIRPNKVQKVGNLFMDTVHEEEIRLLNQLYDTLMKKDVEKADQLMDELLVDLEDHFTTEEELMREFEFFAYPMHKAEHDTMRKRFKEVYDKWKKEKNPEEVVRFLKEEFVPWLKSHVARWDSTTAQQLGD</sequence>
<keyword id="KW-0408">Iron</keyword>
<keyword id="KW-0479">Metal-binding</keyword>
<keyword id="KW-0561">Oxygen transport</keyword>
<keyword id="KW-1185">Reference proteome</keyword>
<keyword id="KW-0813">Transport</keyword>
<comment type="function">
    <text evidence="1">Oxygen-binding protein. May be involved in a storage mechanism or for delivery to oxygen-requiring enzymes. The oxygen-binding site contains two iron atoms.</text>
</comment>
<comment type="subunit">
    <text evidence="1">Monomer.</text>
</comment>
<comment type="similarity">
    <text evidence="1">Belongs to the hemerythrin family.</text>
</comment>
<evidence type="ECO:0000255" key="1">
    <source>
        <dbReference type="HAMAP-Rule" id="MF_00556"/>
    </source>
</evidence>
<dbReference type="EMBL" id="AE000657">
    <property type="protein sequence ID" value="AAC07584.1"/>
    <property type="molecule type" value="Genomic_DNA"/>
</dbReference>
<dbReference type="PIR" id="D70448">
    <property type="entry name" value="D70448"/>
</dbReference>
<dbReference type="RefSeq" id="NP_214180.1">
    <property type="nucleotide sequence ID" value="NC_000918.1"/>
</dbReference>
<dbReference type="RefSeq" id="WP_010881117.1">
    <property type="nucleotide sequence ID" value="NC_000918.1"/>
</dbReference>
<dbReference type="SMR" id="O67614"/>
<dbReference type="STRING" id="224324.aq_1719"/>
<dbReference type="EnsemblBacteria" id="AAC07584">
    <property type="protein sequence ID" value="AAC07584"/>
    <property type="gene ID" value="aq_1719"/>
</dbReference>
<dbReference type="KEGG" id="aae:aq_1719"/>
<dbReference type="PATRIC" id="fig|224324.8.peg.1322"/>
<dbReference type="eggNOG" id="COG2703">
    <property type="taxonomic scope" value="Bacteria"/>
</dbReference>
<dbReference type="HOGENOM" id="CLU_086902_1_3_0"/>
<dbReference type="InParanoid" id="O67614"/>
<dbReference type="OrthoDB" id="9774644at2"/>
<dbReference type="Proteomes" id="UP000000798">
    <property type="component" value="Chromosome"/>
</dbReference>
<dbReference type="GO" id="GO:0005506">
    <property type="term" value="F:iron ion binding"/>
    <property type="evidence" value="ECO:0007669"/>
    <property type="project" value="UniProtKB-UniRule"/>
</dbReference>
<dbReference type="GO" id="GO:0005344">
    <property type="term" value="F:oxygen carrier activity"/>
    <property type="evidence" value="ECO:0007669"/>
    <property type="project" value="UniProtKB-UniRule"/>
</dbReference>
<dbReference type="CDD" id="cd12107">
    <property type="entry name" value="Hemerythrin"/>
    <property type="match status" value="1"/>
</dbReference>
<dbReference type="Gene3D" id="1.20.120.50">
    <property type="entry name" value="Hemerythrin-like"/>
    <property type="match status" value="1"/>
</dbReference>
<dbReference type="HAMAP" id="MF_00556">
    <property type="entry name" value="Hemerythrin"/>
    <property type="match status" value="1"/>
</dbReference>
<dbReference type="InterPro" id="IPR023504">
    <property type="entry name" value="Bacteriohemerythrin-like"/>
</dbReference>
<dbReference type="InterPro" id="IPR016131">
    <property type="entry name" value="Haemerythrin_Fe_BS"/>
</dbReference>
<dbReference type="InterPro" id="IPR050669">
    <property type="entry name" value="Hemerythrin"/>
</dbReference>
<dbReference type="InterPro" id="IPR012312">
    <property type="entry name" value="Hemerythrin-like"/>
</dbReference>
<dbReference type="InterPro" id="IPR035938">
    <property type="entry name" value="Hemerythrin-like_sf"/>
</dbReference>
<dbReference type="InterPro" id="IPR012827">
    <property type="entry name" value="Hemerythrin_metal-bd"/>
</dbReference>
<dbReference type="NCBIfam" id="TIGR02481">
    <property type="entry name" value="hemeryth_dom"/>
    <property type="match status" value="1"/>
</dbReference>
<dbReference type="PANTHER" id="PTHR37164">
    <property type="entry name" value="BACTERIOHEMERYTHRIN"/>
    <property type="match status" value="1"/>
</dbReference>
<dbReference type="PANTHER" id="PTHR37164:SF1">
    <property type="entry name" value="BACTERIOHEMERYTHRIN"/>
    <property type="match status" value="1"/>
</dbReference>
<dbReference type="Pfam" id="PF01814">
    <property type="entry name" value="Hemerythrin"/>
    <property type="match status" value="1"/>
</dbReference>
<dbReference type="SUPFAM" id="SSF47188">
    <property type="entry name" value="Hemerythrin-like"/>
    <property type="match status" value="1"/>
</dbReference>
<dbReference type="PROSITE" id="PS00550">
    <property type="entry name" value="HEMERYTHRINS"/>
    <property type="match status" value="1"/>
</dbReference>
<protein>
    <recommendedName>
        <fullName evidence="1">Bacteriohemerythrin</fullName>
    </recommendedName>
</protein>
<gene>
    <name type="ordered locus">aq_1719</name>
</gene>